<dbReference type="EMBL" id="Y11932">
    <property type="protein sequence ID" value="CAA72682.1"/>
    <property type="molecule type" value="mRNA"/>
</dbReference>
<dbReference type="EMBL" id="FQ312003">
    <property type="protein sequence ID" value="CBW18019.1"/>
    <property type="molecule type" value="Genomic_DNA"/>
</dbReference>
<dbReference type="RefSeq" id="WP_000208509.1">
    <property type="nucleotide sequence ID" value="NZ_QASL01000003.1"/>
</dbReference>
<dbReference type="SMR" id="E1WGN1"/>
<dbReference type="KEGG" id="sey:SL1344_1924"/>
<dbReference type="PATRIC" id="fig|216597.6.peg.2139"/>
<dbReference type="HOGENOM" id="CLU_117621_2_1_6"/>
<dbReference type="BioCyc" id="SENT216597:SL1344_RS09980-MONOMER"/>
<dbReference type="Proteomes" id="UP000008962">
    <property type="component" value="Chromosome"/>
</dbReference>
<dbReference type="GO" id="GO:0005829">
    <property type="term" value="C:cytosol"/>
    <property type="evidence" value="ECO:0007669"/>
    <property type="project" value="UniProtKB-ARBA"/>
</dbReference>
<dbReference type="GO" id="GO:0003677">
    <property type="term" value="F:DNA binding"/>
    <property type="evidence" value="ECO:0007669"/>
    <property type="project" value="UniProtKB-KW"/>
</dbReference>
<dbReference type="CDD" id="cd04458">
    <property type="entry name" value="CSP_CDS"/>
    <property type="match status" value="1"/>
</dbReference>
<dbReference type="FunFam" id="2.40.50.140:FF:000006">
    <property type="entry name" value="Cold shock protein CspC"/>
    <property type="match status" value="1"/>
</dbReference>
<dbReference type="Gene3D" id="2.40.50.140">
    <property type="entry name" value="Nucleic acid-binding proteins"/>
    <property type="match status" value="1"/>
</dbReference>
<dbReference type="InterPro" id="IPR012156">
    <property type="entry name" value="Cold_shock_CspA"/>
</dbReference>
<dbReference type="InterPro" id="IPR050181">
    <property type="entry name" value="Cold_shock_domain"/>
</dbReference>
<dbReference type="InterPro" id="IPR011129">
    <property type="entry name" value="CSD"/>
</dbReference>
<dbReference type="InterPro" id="IPR019844">
    <property type="entry name" value="CSD_CS"/>
</dbReference>
<dbReference type="InterPro" id="IPR002059">
    <property type="entry name" value="CSP_DNA-bd"/>
</dbReference>
<dbReference type="InterPro" id="IPR012340">
    <property type="entry name" value="NA-bd_OB-fold"/>
</dbReference>
<dbReference type="PANTHER" id="PTHR11544">
    <property type="entry name" value="COLD SHOCK DOMAIN CONTAINING PROTEINS"/>
    <property type="match status" value="1"/>
</dbReference>
<dbReference type="Pfam" id="PF00313">
    <property type="entry name" value="CSD"/>
    <property type="match status" value="1"/>
</dbReference>
<dbReference type="PIRSF" id="PIRSF002599">
    <property type="entry name" value="Cold_shock_A"/>
    <property type="match status" value="1"/>
</dbReference>
<dbReference type="PRINTS" id="PR00050">
    <property type="entry name" value="COLDSHOCK"/>
</dbReference>
<dbReference type="SMART" id="SM00357">
    <property type="entry name" value="CSP"/>
    <property type="match status" value="1"/>
</dbReference>
<dbReference type="SUPFAM" id="SSF50249">
    <property type="entry name" value="Nucleic acid-binding proteins"/>
    <property type="match status" value="1"/>
</dbReference>
<dbReference type="PROSITE" id="PS00352">
    <property type="entry name" value="CSD_1"/>
    <property type="match status" value="1"/>
</dbReference>
<dbReference type="PROSITE" id="PS51857">
    <property type="entry name" value="CSD_2"/>
    <property type="match status" value="1"/>
</dbReference>
<reference key="1">
    <citation type="journal article" date="1998" name="Microbiology">
        <title>Expression of the cold-shock gene cspB in Salmonella typhimurium occurs below a threshold temperature.</title>
        <authorList>
            <person name="Craig J.E."/>
            <person name="Boyle D."/>
            <person name="Francis K.P."/>
            <person name="Gallagher M.P."/>
        </authorList>
    </citation>
    <scope>NUCLEOTIDE SEQUENCE [GENOMIC DNA]</scope>
    <scope>INDUCTION</scope>
    <source>
        <strain>SL1344</strain>
    </source>
</reference>
<reference key="2">
    <citation type="journal article" date="2012" name="Proc. Natl. Acad. Sci. U.S.A.">
        <title>The transcriptional landscape and small RNAs of Salmonella enterica serovar Typhimurium.</title>
        <authorList>
            <person name="Kroger C."/>
            <person name="Dillon S.C."/>
            <person name="Cameron A.D."/>
            <person name="Papenfort K."/>
            <person name="Sivasankaran S.K."/>
            <person name="Hokamp K."/>
            <person name="Chao Y."/>
            <person name="Sittka A."/>
            <person name="Hebrard M."/>
            <person name="Handler K."/>
            <person name="Colgan A."/>
            <person name="Leekitcharoenphon P."/>
            <person name="Langridge G.C."/>
            <person name="Lohan A.J."/>
            <person name="Loftus B."/>
            <person name="Lucchini S."/>
            <person name="Ussery D.W."/>
            <person name="Dorman C.J."/>
            <person name="Thomson N.R."/>
            <person name="Vogel J."/>
            <person name="Hinton J.C."/>
        </authorList>
    </citation>
    <scope>NUCLEOTIDE SEQUENCE [LARGE SCALE GENOMIC DNA]</scope>
    <source>
        <strain>SL1344</strain>
    </source>
</reference>
<evidence type="ECO:0000250" key="1"/>
<evidence type="ECO:0000269" key="2">
    <source>
    </source>
</evidence>
<gene>
    <name type="primary">cspJ</name>
    <name type="synonym">cspB</name>
    <name type="synonym">cspG</name>
    <name type="ordered locus">SL1344_1924</name>
</gene>
<accession>E1WGN1</accession>
<accession>P39818</accession>
<accession>Q9R766</accession>
<feature type="chain" id="PRO_0000405412" description="Cold shock-like protein CspJ">
    <location>
        <begin position="1"/>
        <end position="70"/>
    </location>
</feature>
<feature type="domain" description="CSD">
    <location>
        <begin position="7"/>
        <end position="67"/>
    </location>
</feature>
<sequence>MTTKITGLVKWFNPEKGFGFITPKDGSKDVFVHFSAIQSNEFRTLNENQEVEFSVEQGPKGPSAVNVVAL</sequence>
<keyword id="KW-0010">Activator</keyword>
<keyword id="KW-0963">Cytoplasm</keyword>
<keyword id="KW-0238">DNA-binding</keyword>
<keyword id="KW-0346">Stress response</keyword>
<keyword id="KW-0804">Transcription</keyword>
<keyword id="KW-0805">Transcription regulation</keyword>
<proteinExistence type="evidence at transcript level"/>
<organism>
    <name type="scientific">Salmonella typhimurium (strain SL1344)</name>
    <dbReference type="NCBI Taxonomy" id="216597"/>
    <lineage>
        <taxon>Bacteria</taxon>
        <taxon>Pseudomonadati</taxon>
        <taxon>Pseudomonadota</taxon>
        <taxon>Gammaproteobacteria</taxon>
        <taxon>Enterobacterales</taxon>
        <taxon>Enterobacteriaceae</taxon>
        <taxon>Salmonella</taxon>
    </lineage>
</organism>
<protein>
    <recommendedName>
        <fullName>Cold shock-like protein CspJ</fullName>
    </recommendedName>
</protein>
<comment type="subcellular location">
    <subcellularLocation>
        <location evidence="1">Cytoplasm</location>
    </subcellularLocation>
</comment>
<comment type="induction">
    <text evidence="2">In response to low temperature. Is induced below an apparent threshold temperature of approximately 22 degrees Celsius.</text>
</comment>
<name>CSPJ_SALTS</name>